<evidence type="ECO:0000255" key="1">
    <source>
        <dbReference type="HAMAP-Rule" id="MF_00501"/>
    </source>
</evidence>
<evidence type="ECO:0000305" key="2"/>
<proteinExistence type="inferred from homology"/>
<dbReference type="EMBL" id="CP000698">
    <property type="protein sequence ID" value="ABQ28208.1"/>
    <property type="molecule type" value="Genomic_DNA"/>
</dbReference>
<dbReference type="RefSeq" id="WP_011940845.1">
    <property type="nucleotide sequence ID" value="NC_009483.1"/>
</dbReference>
<dbReference type="SMR" id="A5G8U0"/>
<dbReference type="STRING" id="351605.Gura_4064"/>
<dbReference type="KEGG" id="gur:Gura_4064"/>
<dbReference type="HOGENOM" id="CLU_114306_4_3_7"/>
<dbReference type="OrthoDB" id="9803251at2"/>
<dbReference type="Proteomes" id="UP000006695">
    <property type="component" value="Chromosome"/>
</dbReference>
<dbReference type="GO" id="GO:1990904">
    <property type="term" value="C:ribonucleoprotein complex"/>
    <property type="evidence" value="ECO:0007669"/>
    <property type="project" value="UniProtKB-KW"/>
</dbReference>
<dbReference type="GO" id="GO:0005840">
    <property type="term" value="C:ribosome"/>
    <property type="evidence" value="ECO:0007669"/>
    <property type="project" value="UniProtKB-KW"/>
</dbReference>
<dbReference type="GO" id="GO:0046872">
    <property type="term" value="F:metal ion binding"/>
    <property type="evidence" value="ECO:0007669"/>
    <property type="project" value="UniProtKB-KW"/>
</dbReference>
<dbReference type="GO" id="GO:0019843">
    <property type="term" value="F:rRNA binding"/>
    <property type="evidence" value="ECO:0007669"/>
    <property type="project" value="UniProtKB-KW"/>
</dbReference>
<dbReference type="GO" id="GO:0003735">
    <property type="term" value="F:structural constituent of ribosome"/>
    <property type="evidence" value="ECO:0007669"/>
    <property type="project" value="InterPro"/>
</dbReference>
<dbReference type="GO" id="GO:0006412">
    <property type="term" value="P:translation"/>
    <property type="evidence" value="ECO:0007669"/>
    <property type="project" value="UniProtKB-UniRule"/>
</dbReference>
<dbReference type="Gene3D" id="4.10.830.30">
    <property type="entry name" value="Ribosomal protein L31"/>
    <property type="match status" value="1"/>
</dbReference>
<dbReference type="HAMAP" id="MF_00501">
    <property type="entry name" value="Ribosomal_bL31_1"/>
    <property type="match status" value="1"/>
</dbReference>
<dbReference type="InterPro" id="IPR034704">
    <property type="entry name" value="Ribosomal_bL28/bL31-like_sf"/>
</dbReference>
<dbReference type="InterPro" id="IPR002150">
    <property type="entry name" value="Ribosomal_bL31"/>
</dbReference>
<dbReference type="InterPro" id="IPR027491">
    <property type="entry name" value="Ribosomal_bL31_A"/>
</dbReference>
<dbReference type="InterPro" id="IPR042105">
    <property type="entry name" value="Ribosomal_bL31_sf"/>
</dbReference>
<dbReference type="NCBIfam" id="TIGR00105">
    <property type="entry name" value="L31"/>
    <property type="match status" value="1"/>
</dbReference>
<dbReference type="NCBIfam" id="NF000612">
    <property type="entry name" value="PRK00019.1"/>
    <property type="match status" value="1"/>
</dbReference>
<dbReference type="NCBIfam" id="NF001809">
    <property type="entry name" value="PRK00528.1"/>
    <property type="match status" value="1"/>
</dbReference>
<dbReference type="PANTHER" id="PTHR33280">
    <property type="entry name" value="50S RIBOSOMAL PROTEIN L31, CHLOROPLASTIC"/>
    <property type="match status" value="1"/>
</dbReference>
<dbReference type="PANTHER" id="PTHR33280:SF6">
    <property type="entry name" value="LARGE RIBOSOMAL SUBUNIT PROTEIN BL31A"/>
    <property type="match status" value="1"/>
</dbReference>
<dbReference type="Pfam" id="PF01197">
    <property type="entry name" value="Ribosomal_L31"/>
    <property type="match status" value="1"/>
</dbReference>
<dbReference type="PRINTS" id="PR01249">
    <property type="entry name" value="RIBOSOMALL31"/>
</dbReference>
<dbReference type="SUPFAM" id="SSF143800">
    <property type="entry name" value="L28p-like"/>
    <property type="match status" value="1"/>
</dbReference>
<dbReference type="PROSITE" id="PS01143">
    <property type="entry name" value="RIBOSOMAL_L31"/>
    <property type="match status" value="1"/>
</dbReference>
<name>RL31_GEOUR</name>
<organism>
    <name type="scientific">Geotalea uraniireducens (strain Rf4)</name>
    <name type="common">Geobacter uraniireducens</name>
    <dbReference type="NCBI Taxonomy" id="351605"/>
    <lineage>
        <taxon>Bacteria</taxon>
        <taxon>Pseudomonadati</taxon>
        <taxon>Thermodesulfobacteriota</taxon>
        <taxon>Desulfuromonadia</taxon>
        <taxon>Geobacterales</taxon>
        <taxon>Geobacteraceae</taxon>
        <taxon>Geotalea</taxon>
    </lineage>
</organism>
<comment type="function">
    <text evidence="1">Binds the 23S rRNA.</text>
</comment>
<comment type="cofactor">
    <cofactor evidence="1">
        <name>Zn(2+)</name>
        <dbReference type="ChEBI" id="CHEBI:29105"/>
    </cofactor>
    <text evidence="1">Binds 1 zinc ion per subunit.</text>
</comment>
<comment type="subunit">
    <text evidence="1">Part of the 50S ribosomal subunit.</text>
</comment>
<comment type="similarity">
    <text evidence="1">Belongs to the bacterial ribosomal protein bL31 family. Type A subfamily.</text>
</comment>
<reference key="1">
    <citation type="submission" date="2007-05" db="EMBL/GenBank/DDBJ databases">
        <title>Complete sequence of Geobacter uraniireducens Rf4.</title>
        <authorList>
            <consortium name="US DOE Joint Genome Institute"/>
            <person name="Copeland A."/>
            <person name="Lucas S."/>
            <person name="Lapidus A."/>
            <person name="Barry K."/>
            <person name="Detter J.C."/>
            <person name="Glavina del Rio T."/>
            <person name="Hammon N."/>
            <person name="Israni S."/>
            <person name="Dalin E."/>
            <person name="Tice H."/>
            <person name="Pitluck S."/>
            <person name="Chertkov O."/>
            <person name="Brettin T."/>
            <person name="Bruce D."/>
            <person name="Han C."/>
            <person name="Schmutz J."/>
            <person name="Larimer F."/>
            <person name="Land M."/>
            <person name="Hauser L."/>
            <person name="Kyrpides N."/>
            <person name="Mikhailova N."/>
            <person name="Shelobolina E."/>
            <person name="Aklujkar M."/>
            <person name="Lovley D."/>
            <person name="Richardson P."/>
        </authorList>
    </citation>
    <scope>NUCLEOTIDE SEQUENCE [LARGE SCALE GENOMIC DNA]</scope>
    <source>
        <strain>ATCC BAA-1134 / JCM 13001 / Rf4</strain>
    </source>
</reference>
<accession>A5G8U0</accession>
<protein>
    <recommendedName>
        <fullName evidence="1">Large ribosomal subunit protein bL31</fullName>
    </recommendedName>
    <alternativeName>
        <fullName evidence="2">50S ribosomal protein L31</fullName>
    </alternativeName>
</protein>
<gene>
    <name evidence="1" type="primary">rpmE</name>
    <name type="ordered locus">Gura_4064</name>
</gene>
<feature type="chain" id="PRO_1000126637" description="Large ribosomal subunit protein bL31">
    <location>
        <begin position="1"/>
        <end position="65"/>
    </location>
</feature>
<feature type="binding site" evidence="1">
    <location>
        <position position="16"/>
    </location>
    <ligand>
        <name>Zn(2+)</name>
        <dbReference type="ChEBI" id="CHEBI:29105"/>
    </ligand>
</feature>
<feature type="binding site" evidence="1">
    <location>
        <position position="18"/>
    </location>
    <ligand>
        <name>Zn(2+)</name>
        <dbReference type="ChEBI" id="CHEBI:29105"/>
    </ligand>
</feature>
<feature type="binding site" evidence="1">
    <location>
        <position position="36"/>
    </location>
    <ligand>
        <name>Zn(2+)</name>
        <dbReference type="ChEBI" id="CHEBI:29105"/>
    </ligand>
</feature>
<feature type="binding site" evidence="1">
    <location>
        <position position="39"/>
    </location>
    <ligand>
        <name>Zn(2+)</name>
        <dbReference type="ChEBI" id="CHEBI:29105"/>
    </ligand>
</feature>
<sequence length="65" mass="7443">MKEGIHPNYTEVTVKCLCGNTFQTRSTKPEISTEICSACHPFFTGKQKLIDTAGRVERFKRRYGM</sequence>
<keyword id="KW-0479">Metal-binding</keyword>
<keyword id="KW-1185">Reference proteome</keyword>
<keyword id="KW-0687">Ribonucleoprotein</keyword>
<keyword id="KW-0689">Ribosomal protein</keyword>
<keyword id="KW-0694">RNA-binding</keyword>
<keyword id="KW-0699">rRNA-binding</keyword>
<keyword id="KW-0862">Zinc</keyword>